<keyword id="KW-0456">Lyase</keyword>
<keyword id="KW-0479">Metal-binding</keyword>
<comment type="function">
    <text evidence="1">Catalyzes the aldol cleavage of 4-hydroxy-4-methyl-2-oxoglutarate (HMG) into 2 molecules of pyruvate. Also contains a secondary oxaloacetate (OAA) decarboxylase activity due to the common pyruvate enolate transition state formed following C-C bond cleavage in the retro-aldol and decarboxylation reactions (By similarity).</text>
</comment>
<comment type="catalytic activity">
    <reaction>
        <text>4-hydroxy-4-methyl-2-oxoglutarate = 2 pyruvate</text>
        <dbReference type="Rhea" id="RHEA:22748"/>
        <dbReference type="ChEBI" id="CHEBI:15361"/>
        <dbReference type="ChEBI" id="CHEBI:58276"/>
        <dbReference type="EC" id="4.1.3.17"/>
    </reaction>
</comment>
<comment type="catalytic activity">
    <reaction>
        <text>oxaloacetate + H(+) = pyruvate + CO2</text>
        <dbReference type="Rhea" id="RHEA:15641"/>
        <dbReference type="ChEBI" id="CHEBI:15361"/>
        <dbReference type="ChEBI" id="CHEBI:15378"/>
        <dbReference type="ChEBI" id="CHEBI:16452"/>
        <dbReference type="ChEBI" id="CHEBI:16526"/>
        <dbReference type="EC" id="4.1.1.112"/>
    </reaction>
</comment>
<comment type="cofactor">
    <cofactor evidence="1">
        <name>a divalent metal cation</name>
        <dbReference type="ChEBI" id="CHEBI:60240"/>
    </cofactor>
    <text evidence="1">Divalent metal cation.</text>
</comment>
<comment type="subunit">
    <text evidence="1">Homotrimer.</text>
</comment>
<comment type="similarity">
    <text evidence="2">Belongs to the class II aldolase/RraA-like family.</text>
</comment>
<sequence length="161" mass="16413">MTVSFRPTADLVDDIGPDVRSCDLQFRQLGGRTEFAGPISTVRCFQDNALLKSVLSEPGGGGVLVVDGGGSLHTALVGDVIAELARANGWAGLIVNGAVRDSAALRGMDIGVKALGTNPRKSTKTGAGERDVDITLGGVTFTPGDIAYSDDDGIVVVAAGD</sequence>
<accession>A0Q981</accession>
<gene>
    <name type="ordered locus">MAV_0174</name>
</gene>
<reference key="1">
    <citation type="submission" date="2006-10" db="EMBL/GenBank/DDBJ databases">
        <authorList>
            <person name="Fleischmann R.D."/>
            <person name="Dodson R.J."/>
            <person name="Haft D.H."/>
            <person name="Merkel J.S."/>
            <person name="Nelson W.C."/>
            <person name="Fraser C.M."/>
        </authorList>
    </citation>
    <scope>NUCLEOTIDE SEQUENCE [LARGE SCALE GENOMIC DNA]</scope>
    <source>
        <strain>104</strain>
    </source>
</reference>
<proteinExistence type="inferred from homology"/>
<name>RRAAH_MYCA1</name>
<protein>
    <recommendedName>
        <fullName>Putative 4-hydroxy-4-methyl-2-oxoglutarate aldolase</fullName>
        <shortName>HMG aldolase</shortName>
        <ecNumber>4.1.3.17</ecNumber>
    </recommendedName>
    <alternativeName>
        <fullName>Oxaloacetate decarboxylase</fullName>
        <shortName>OAA decarboxylase</shortName>
        <ecNumber>4.1.1.112</ecNumber>
    </alternativeName>
    <alternativeName>
        <fullName>Regulator of ribonuclease activity homolog</fullName>
    </alternativeName>
    <alternativeName>
        <fullName>RraA-like protein</fullName>
    </alternativeName>
</protein>
<dbReference type="EC" id="4.1.3.17"/>
<dbReference type="EC" id="4.1.1.112"/>
<dbReference type="EMBL" id="CP000479">
    <property type="protein sequence ID" value="ABK65807.1"/>
    <property type="molecule type" value="Genomic_DNA"/>
</dbReference>
<dbReference type="SMR" id="A0Q981"/>
<dbReference type="KEGG" id="mav:MAV_0174"/>
<dbReference type="HOGENOM" id="CLU_072626_4_0_11"/>
<dbReference type="Proteomes" id="UP000001574">
    <property type="component" value="Chromosome"/>
</dbReference>
<dbReference type="GO" id="GO:0047443">
    <property type="term" value="F:4-hydroxy-4-methyl-2-oxoglutarate aldolase activity"/>
    <property type="evidence" value="ECO:0007669"/>
    <property type="project" value="UniProtKB-EC"/>
</dbReference>
<dbReference type="GO" id="GO:0046872">
    <property type="term" value="F:metal ion binding"/>
    <property type="evidence" value="ECO:0007669"/>
    <property type="project" value="UniProtKB-KW"/>
</dbReference>
<dbReference type="GO" id="GO:0008948">
    <property type="term" value="F:oxaloacetate decarboxylase activity"/>
    <property type="evidence" value="ECO:0007669"/>
    <property type="project" value="UniProtKB-EC"/>
</dbReference>
<dbReference type="GO" id="GO:0008428">
    <property type="term" value="F:ribonuclease inhibitor activity"/>
    <property type="evidence" value="ECO:0007669"/>
    <property type="project" value="InterPro"/>
</dbReference>
<dbReference type="GO" id="GO:0051252">
    <property type="term" value="P:regulation of RNA metabolic process"/>
    <property type="evidence" value="ECO:0007669"/>
    <property type="project" value="InterPro"/>
</dbReference>
<dbReference type="CDD" id="cd16841">
    <property type="entry name" value="RraA_family"/>
    <property type="match status" value="1"/>
</dbReference>
<dbReference type="Gene3D" id="3.50.30.40">
    <property type="entry name" value="Ribonuclease E inhibitor RraA/RraA-like"/>
    <property type="match status" value="1"/>
</dbReference>
<dbReference type="InterPro" id="IPR010203">
    <property type="entry name" value="RraA"/>
</dbReference>
<dbReference type="InterPro" id="IPR005493">
    <property type="entry name" value="RraA/RraA-like"/>
</dbReference>
<dbReference type="InterPro" id="IPR036704">
    <property type="entry name" value="RraA/RraA-like_sf"/>
</dbReference>
<dbReference type="NCBIfam" id="TIGR01935">
    <property type="entry name" value="NOT-MenG"/>
    <property type="match status" value="1"/>
</dbReference>
<dbReference type="NCBIfam" id="NF006875">
    <property type="entry name" value="PRK09372.1"/>
    <property type="match status" value="1"/>
</dbReference>
<dbReference type="PANTHER" id="PTHR33254">
    <property type="entry name" value="4-HYDROXY-4-METHYL-2-OXOGLUTARATE ALDOLASE 3-RELATED"/>
    <property type="match status" value="1"/>
</dbReference>
<dbReference type="PANTHER" id="PTHR33254:SF4">
    <property type="entry name" value="4-HYDROXY-4-METHYL-2-OXOGLUTARATE ALDOLASE 3-RELATED"/>
    <property type="match status" value="1"/>
</dbReference>
<dbReference type="Pfam" id="PF03737">
    <property type="entry name" value="RraA-like"/>
    <property type="match status" value="1"/>
</dbReference>
<dbReference type="SUPFAM" id="SSF89562">
    <property type="entry name" value="RraA-like"/>
    <property type="match status" value="1"/>
</dbReference>
<feature type="chain" id="PRO_1000013847" description="Putative 4-hydroxy-4-methyl-2-oxoglutarate aldolase">
    <location>
        <begin position="1"/>
        <end position="161"/>
    </location>
</feature>
<feature type="binding site" evidence="1">
    <location>
        <begin position="78"/>
        <end position="81"/>
    </location>
    <ligand>
        <name>substrate</name>
    </ligand>
</feature>
<feature type="binding site" evidence="1">
    <location>
        <position position="100"/>
    </location>
    <ligand>
        <name>substrate</name>
    </ligand>
</feature>
<feature type="binding site" evidence="1">
    <location>
        <position position="101"/>
    </location>
    <ligand>
        <name>a divalent metal cation</name>
        <dbReference type="ChEBI" id="CHEBI:60240"/>
    </ligand>
</feature>
<evidence type="ECO:0000250" key="1"/>
<evidence type="ECO:0000305" key="2"/>
<organism>
    <name type="scientific">Mycobacterium avium (strain 104)</name>
    <dbReference type="NCBI Taxonomy" id="243243"/>
    <lineage>
        <taxon>Bacteria</taxon>
        <taxon>Bacillati</taxon>
        <taxon>Actinomycetota</taxon>
        <taxon>Actinomycetes</taxon>
        <taxon>Mycobacteriales</taxon>
        <taxon>Mycobacteriaceae</taxon>
        <taxon>Mycobacterium</taxon>
        <taxon>Mycobacterium avium complex (MAC)</taxon>
    </lineage>
</organism>